<gene>
    <name evidence="4" type="primary">PT2</name>
</gene>
<dbReference type="EMBL" id="EU532761">
    <property type="protein sequence ID" value="ACB37439.1"/>
    <property type="molecule type" value="Genomic_DNA"/>
</dbReference>
<dbReference type="SMR" id="B2CPI4"/>
<dbReference type="GO" id="GO:0005886">
    <property type="term" value="C:plasma membrane"/>
    <property type="evidence" value="ECO:0007669"/>
    <property type="project" value="UniProtKB-SubCell"/>
</dbReference>
<dbReference type="GO" id="GO:0015293">
    <property type="term" value="F:symporter activity"/>
    <property type="evidence" value="ECO:0007669"/>
    <property type="project" value="UniProtKB-KW"/>
</dbReference>
<dbReference type="GO" id="GO:0006817">
    <property type="term" value="P:phosphate ion transport"/>
    <property type="evidence" value="ECO:0007669"/>
    <property type="project" value="UniProtKB-KW"/>
</dbReference>
<dbReference type="GO" id="GO:0009610">
    <property type="term" value="P:response to symbiotic fungus"/>
    <property type="evidence" value="ECO:0000270"/>
    <property type="project" value="UniProtKB"/>
</dbReference>
<dbReference type="Gene3D" id="1.20.1250.20">
    <property type="entry name" value="MFS general substrate transporter like domains"/>
    <property type="match status" value="1"/>
</dbReference>
<dbReference type="InterPro" id="IPR036259">
    <property type="entry name" value="MFS_trans_sf"/>
</dbReference>
<dbReference type="PANTHER" id="PTHR24064">
    <property type="entry name" value="SOLUTE CARRIER FAMILY 22 MEMBER"/>
    <property type="match status" value="1"/>
</dbReference>
<dbReference type="SUPFAM" id="SSF103473">
    <property type="entry name" value="MFS general substrate transporter"/>
    <property type="match status" value="1"/>
</dbReference>
<accession>B2CPI4</accession>
<feature type="chain" id="PRO_0000450037" description="Low affinity inorganic phosphate transporter 2">
    <location>
        <begin position="1" status="less than"/>
        <end position="189" status="greater than"/>
    </location>
</feature>
<feature type="topological domain" description="Cytoplasmic" evidence="5">
    <location>
        <begin position="1"/>
        <end position="55"/>
    </location>
</feature>
<feature type="transmembrane region" description="Helical" evidence="2">
    <location>
        <begin position="56"/>
        <end position="76"/>
    </location>
</feature>
<feature type="topological domain" description="Extracellular" evidence="5">
    <location>
        <begin position="77"/>
        <end position="111"/>
    </location>
</feature>
<feature type="transmembrane region" description="Helical" evidence="2">
    <location>
        <begin position="112"/>
        <end position="132"/>
    </location>
</feature>
<feature type="topological domain" description="Cytoplasmic" evidence="5">
    <location>
        <begin position="133"/>
        <end position="134"/>
    </location>
</feature>
<feature type="transmembrane region" description="Helical" evidence="2">
    <location>
        <begin position="135"/>
        <end position="155"/>
    </location>
</feature>
<feature type="topological domain" description="Extracellular" evidence="5">
    <location>
        <begin position="156"/>
        <end position="165"/>
    </location>
</feature>
<feature type="transmembrane region" description="Helical" evidence="2">
    <location>
        <begin position="166"/>
        <end position="186"/>
    </location>
</feature>
<feature type="topological domain" description="Cytoplasmic" evidence="5">
    <location>
        <begin position="187"/>
        <end position="189"/>
    </location>
</feature>
<feature type="non-terminal residue" evidence="6">
    <location>
        <position position="1"/>
    </location>
</feature>
<feature type="non-terminal residue" evidence="6">
    <location>
        <position position="189"/>
    </location>
</feature>
<comment type="function">
    <text evidence="1">Low-affinity transporter for external inorganic phosphate (Pi).</text>
</comment>
<comment type="catalytic activity">
    <reaction evidence="1">
        <text>phosphate(in) + H(+)(in) = phosphate(out) + H(+)(out)</text>
        <dbReference type="Rhea" id="RHEA:29939"/>
        <dbReference type="ChEBI" id="CHEBI:15378"/>
        <dbReference type="ChEBI" id="CHEBI:43474"/>
    </reaction>
    <physiologicalReaction direction="right-to-left" evidence="1">
        <dbReference type="Rhea" id="RHEA:29941"/>
    </physiologicalReaction>
</comment>
<comment type="subcellular location">
    <subcellularLocation>
        <location evidence="1">Cell membrane</location>
        <topology evidence="2">Multi-pass membrane protein</topology>
    </subcellularLocation>
</comment>
<comment type="induction">
    <text evidence="3">Slightly repressed during arbuscular mycorrhiza (AM) formation after inoculation with AM fungi (e.g. Glomus intraradices).</text>
</comment>
<comment type="miscellaneous">
    <text evidence="5">Although related to the sugar transporter family, it does not transport sugars.</text>
</comment>
<comment type="similarity">
    <text evidence="5">Belongs to the major facilitator superfamily. Phosphate:H(+) symporter (TC 2.A.1.9) family.</text>
</comment>
<evidence type="ECO:0000250" key="1">
    <source>
        <dbReference type="UniProtKB" id="Q8GSG4"/>
    </source>
</evidence>
<evidence type="ECO:0000255" key="2"/>
<evidence type="ECO:0000269" key="3">
    <source>
    </source>
</evidence>
<evidence type="ECO:0000303" key="4">
    <source>
    </source>
</evidence>
<evidence type="ECO:0000305" key="5"/>
<evidence type="ECO:0000312" key="6">
    <source>
        <dbReference type="EMBL" id="ACB37439.1"/>
    </source>
</evidence>
<proteinExistence type="evidence at transcript level"/>
<name>PHT12_PETHY</name>
<organism>
    <name type="scientific">Petunia hybrida</name>
    <name type="common">Petunia</name>
    <dbReference type="NCBI Taxonomy" id="4102"/>
    <lineage>
        <taxon>Eukaryota</taxon>
        <taxon>Viridiplantae</taxon>
        <taxon>Streptophyta</taxon>
        <taxon>Embryophyta</taxon>
        <taxon>Tracheophyta</taxon>
        <taxon>Spermatophyta</taxon>
        <taxon>Magnoliopsida</taxon>
        <taxon>eudicotyledons</taxon>
        <taxon>Gunneridae</taxon>
        <taxon>Pentapetalae</taxon>
        <taxon>asterids</taxon>
        <taxon>lamiids</taxon>
        <taxon>Solanales</taxon>
        <taxon>Solanaceae</taxon>
        <taxon>Petunioideae</taxon>
        <taxon>Petunia</taxon>
    </lineage>
</organism>
<sequence>TARYTALVAKDAKRAAADMGKVLHVEIDPEDAKVERMAKDESNQFGLFSWEFVRRHGLHLFGTCSTWFLLDIAFYSQNLFQKDVFTAIGWIPPAKTMNAVQEVYKIARAQTLIALCSTVPGYWFTVAFIDIIGRFAIQLMGFFFMTVFMFAIAIPYHHWTLQENRIGFVIMYSLTFFFANFGPNATTFV</sequence>
<keyword id="KW-1003">Cell membrane</keyword>
<keyword id="KW-0472">Membrane</keyword>
<keyword id="KW-0592">Phosphate transport</keyword>
<keyword id="KW-0769">Symport</keyword>
<keyword id="KW-0812">Transmembrane</keyword>
<keyword id="KW-1133">Transmembrane helix</keyword>
<keyword id="KW-0813">Transport</keyword>
<reference key="1">
    <citation type="journal article" date="2008" name="Plant J.">
        <title>A transgenic dTph1 insertional mutagenesis system for forward genetics in mycorrhizal phosphate transport of Petunia.</title>
        <authorList>
            <person name="Wegmueller S."/>
            <person name="Svistoonoff S."/>
            <person name="Reinhardt D."/>
            <person name="Stuurman J."/>
            <person name="Amrhein N."/>
            <person name="Bucher M."/>
        </authorList>
    </citation>
    <scope>NUCLEOTIDE SEQUENCE [GENOMIC DNA]</scope>
    <scope>REPRESSION BY ARBUSCULAR MYCORRHIZAL FUNGI</scope>
    <source>
        <strain>cv. W115</strain>
        <strain>cv. W138</strain>
    </source>
</reference>
<protein>
    <recommendedName>
        <fullName evidence="4">Low affinity inorganic phosphate transporter 2</fullName>
        <shortName evidence="4">PhPT2</shortName>
        <shortName evidence="5">PhPht1;2</shortName>
    </recommendedName>
    <alternativeName>
        <fullName evidence="5">Arbuscular mycorrhiza-induced phosphate transporter PT2</fullName>
        <shortName evidence="5">AM-induced phosphate transporter PT2</shortName>
    </alternativeName>
    <alternativeName>
        <fullName evidence="5">H(+)/Pi cotransporter PT2</fullName>
    </alternativeName>
</protein>